<feature type="chain" id="PRO_0000239872" description="DNA polymerase III subunit alpha">
    <location>
        <begin position="1"/>
        <end position="1160"/>
    </location>
</feature>
<evidence type="ECO:0000250" key="1"/>
<dbReference type="EC" id="2.7.7.7"/>
<dbReference type="EMBL" id="AE014075">
    <property type="protein sequence ID" value="AAN78713.1"/>
    <property type="molecule type" value="Genomic_DNA"/>
</dbReference>
<dbReference type="RefSeq" id="WP_001294736.1">
    <property type="nucleotide sequence ID" value="NZ_CP051263.1"/>
</dbReference>
<dbReference type="SMR" id="Q8FL05"/>
<dbReference type="STRING" id="199310.c0221"/>
<dbReference type="KEGG" id="ecc:c0221"/>
<dbReference type="eggNOG" id="COG0587">
    <property type="taxonomic scope" value="Bacteria"/>
</dbReference>
<dbReference type="HOGENOM" id="CLU_001600_0_0_6"/>
<dbReference type="BioCyc" id="ECOL199310:C0221-MONOMER"/>
<dbReference type="Proteomes" id="UP000001410">
    <property type="component" value="Chromosome"/>
</dbReference>
<dbReference type="GO" id="GO:0005737">
    <property type="term" value="C:cytoplasm"/>
    <property type="evidence" value="ECO:0007669"/>
    <property type="project" value="UniProtKB-SubCell"/>
</dbReference>
<dbReference type="GO" id="GO:0008408">
    <property type="term" value="F:3'-5' exonuclease activity"/>
    <property type="evidence" value="ECO:0007669"/>
    <property type="project" value="InterPro"/>
</dbReference>
<dbReference type="GO" id="GO:0003887">
    <property type="term" value="F:DNA-directed DNA polymerase activity"/>
    <property type="evidence" value="ECO:0007669"/>
    <property type="project" value="UniProtKB-KW"/>
</dbReference>
<dbReference type="GO" id="GO:0003676">
    <property type="term" value="F:nucleic acid binding"/>
    <property type="evidence" value="ECO:0007669"/>
    <property type="project" value="InterPro"/>
</dbReference>
<dbReference type="GO" id="GO:0006260">
    <property type="term" value="P:DNA replication"/>
    <property type="evidence" value="ECO:0007669"/>
    <property type="project" value="UniProtKB-KW"/>
</dbReference>
<dbReference type="CDD" id="cd04485">
    <property type="entry name" value="DnaE_OBF"/>
    <property type="match status" value="1"/>
</dbReference>
<dbReference type="CDD" id="cd07433">
    <property type="entry name" value="PHP_PolIIIA_DnaE1"/>
    <property type="match status" value="1"/>
</dbReference>
<dbReference type="FunFam" id="1.10.10.1600:FF:000001">
    <property type="entry name" value="DNA polymerase III subunit alpha"/>
    <property type="match status" value="1"/>
</dbReference>
<dbReference type="FunFam" id="1.10.150.870:FF:000001">
    <property type="entry name" value="DNA polymerase III subunit alpha"/>
    <property type="match status" value="1"/>
</dbReference>
<dbReference type="FunFam" id="2.40.50.140:FF:000106">
    <property type="entry name" value="DNA polymerase III subunit alpha"/>
    <property type="match status" value="1"/>
</dbReference>
<dbReference type="FunFam" id="3.20.20.140:FF:000028">
    <property type="entry name" value="DNA polymerase III subunit alpha"/>
    <property type="match status" value="1"/>
</dbReference>
<dbReference type="Gene3D" id="1.10.150.870">
    <property type="match status" value="1"/>
</dbReference>
<dbReference type="Gene3D" id="1.10.10.1600">
    <property type="entry name" value="Bacterial DNA polymerase III alpha subunit, thumb domain"/>
    <property type="match status" value="1"/>
</dbReference>
<dbReference type="Gene3D" id="3.20.20.140">
    <property type="entry name" value="Metal-dependent hydrolases"/>
    <property type="match status" value="1"/>
</dbReference>
<dbReference type="Gene3D" id="2.40.50.140">
    <property type="entry name" value="Nucleic acid-binding proteins"/>
    <property type="match status" value="1"/>
</dbReference>
<dbReference type="InterPro" id="IPR011708">
    <property type="entry name" value="DNA_pol3_alpha_NTPase_dom"/>
</dbReference>
<dbReference type="InterPro" id="IPR041931">
    <property type="entry name" value="DNA_pol3_alpha_thumb_dom"/>
</dbReference>
<dbReference type="InterPro" id="IPR040982">
    <property type="entry name" value="DNA_pol3_finger"/>
</dbReference>
<dbReference type="InterPro" id="IPR048472">
    <property type="entry name" value="DNA_pol_IIIA_C"/>
</dbReference>
<dbReference type="InterPro" id="IPR004805">
    <property type="entry name" value="DnaE2/DnaE/PolC"/>
</dbReference>
<dbReference type="InterPro" id="IPR029460">
    <property type="entry name" value="DNAPol_HHH"/>
</dbReference>
<dbReference type="InterPro" id="IPR012340">
    <property type="entry name" value="NA-bd_OB-fold"/>
</dbReference>
<dbReference type="InterPro" id="IPR004365">
    <property type="entry name" value="NA-bd_OB_tRNA"/>
</dbReference>
<dbReference type="InterPro" id="IPR004013">
    <property type="entry name" value="PHP_dom"/>
</dbReference>
<dbReference type="InterPro" id="IPR003141">
    <property type="entry name" value="Pol/His_phosphatase_N"/>
</dbReference>
<dbReference type="InterPro" id="IPR016195">
    <property type="entry name" value="Pol/histidinol_Pase-like"/>
</dbReference>
<dbReference type="InterPro" id="IPR049821">
    <property type="entry name" value="PolIIIA_DnaE1_PHP"/>
</dbReference>
<dbReference type="NCBIfam" id="TIGR00594">
    <property type="entry name" value="polc"/>
    <property type="match status" value="1"/>
</dbReference>
<dbReference type="NCBIfam" id="NF004226">
    <property type="entry name" value="PRK05673.1"/>
    <property type="match status" value="1"/>
</dbReference>
<dbReference type="PANTHER" id="PTHR32294">
    <property type="entry name" value="DNA POLYMERASE III SUBUNIT ALPHA"/>
    <property type="match status" value="1"/>
</dbReference>
<dbReference type="PANTHER" id="PTHR32294:SF0">
    <property type="entry name" value="DNA POLYMERASE III SUBUNIT ALPHA"/>
    <property type="match status" value="1"/>
</dbReference>
<dbReference type="Pfam" id="PF07733">
    <property type="entry name" value="DNA_pol3_alpha"/>
    <property type="match status" value="1"/>
</dbReference>
<dbReference type="Pfam" id="PF17657">
    <property type="entry name" value="DNA_pol3_finger"/>
    <property type="match status" value="1"/>
</dbReference>
<dbReference type="Pfam" id="PF20914">
    <property type="entry name" value="DNA_pol_IIIA_C"/>
    <property type="match status" value="1"/>
</dbReference>
<dbReference type="Pfam" id="PF14579">
    <property type="entry name" value="HHH_6"/>
    <property type="match status" value="1"/>
</dbReference>
<dbReference type="Pfam" id="PF02811">
    <property type="entry name" value="PHP"/>
    <property type="match status" value="1"/>
</dbReference>
<dbReference type="Pfam" id="PF01336">
    <property type="entry name" value="tRNA_anti-codon"/>
    <property type="match status" value="1"/>
</dbReference>
<dbReference type="SMART" id="SM00481">
    <property type="entry name" value="POLIIIAc"/>
    <property type="match status" value="1"/>
</dbReference>
<dbReference type="SUPFAM" id="SSF89550">
    <property type="entry name" value="PHP domain-like"/>
    <property type="match status" value="1"/>
</dbReference>
<protein>
    <recommendedName>
        <fullName>DNA polymerase III subunit alpha</fullName>
        <ecNumber>2.7.7.7</ecNumber>
    </recommendedName>
</protein>
<sequence length="1160" mass="129891">MSEPRFVHLRVHSDYSMIDGLAKTAPLVKKAAALGMPALAITDFTNLCGLVKFYGAGHGAGIKPIVGADFNVQCDLLGDELTHLTVLAANNIGYQNLTLLISKAYQRGYGAAGPIIDRDWLIELNEGLILLSGGRMGDVGRSLLRGNSALVDECVAFYEEHFPDRYFLELIRTGRPDEESYLHAAVELAEARGLPVVATNDVRFIDSSDFDAHEIRVAIHDGFTLDDPKRPRNYSPQQYMRSEEEMCELFADIPEALANTVEIAKRCNVTVRLGEYFLPQFPTGDMSTEDYLVKRAKEGLEERLAFLFPDEEERLKRRPEYDERLDTELQVINQMGFPGYFLIVMEFIQWSKDNGVPVGPGRGSGAGSLVAYALKITDLDPLEFDLLFERFLNPERVSMPDFDVDFCMEKRDQVIEHVADMYGRDAVSQIITFGTMAAKAVIRDVGRVLGHPYGFVDRISKLIPPDPGMTLAKAFEAEPQLPEIYEADEEVKALIDMARKLEGVTRNAGKHAGGVVIAPTKITDFAPLYCDEEGKHPVTQFDKSDVEYAGLVKFDFLGLRTLTIINWALEMINKRRAKNGEPPLDIAAIPLDDKKSFDMLQRSETTAVFQLESRGMKDLIKRLQPDCFEDMIALVALFRPGPLQSGMVDNFIDRKHGREEISYPDVQWQHESLKPVLEPTYGIILYQEQVMQIAQVLSGYTLGGADMLRRAMGKKKPEEMAKQRSVFAEGAEKNGINAELAMKIFDLVEKFAGYGFNKSHSAAYALVSYQTLWLKAHYPAEFMAAVMTADMDNTEKVVGLVDECWRMGLKILPPDINSGLYHFHVNDDGEIVYGIGAIKGVGEGPIEAIIEARNKGGYFRELFDLCARTDTKKLNRRVLEKLIMSGAFDRLGPHRAALMNSLGDALKAADQHAKAEAIGQADMFGVLAEEPEQIEQSYASCQPWPEQVVLDGERETLGLYLTGHPINQYLKEIERYVGGVRLKDMHPTERGKVTTAAGLVVAARVMVTKRGNRIGICTLDDRSGRLEVMLFTDALDKYQQLLEKDRILIVSGQVSFDDFSGGLKMTAREVMDIDEAREKYARGLAISLTDRQIDDQLLNRLRQSLEPHRSGTIPVHLYYQRADARARLRFGATWRVSPSDRLLNDLRGLIGSEQVELEFD</sequence>
<gene>
    <name type="primary">dnaE</name>
    <name type="ordered locus">c0221</name>
</gene>
<name>DPO3A_ECOL6</name>
<reference key="1">
    <citation type="journal article" date="2002" name="Proc. Natl. Acad. Sci. U.S.A.">
        <title>Extensive mosaic structure revealed by the complete genome sequence of uropathogenic Escherichia coli.</title>
        <authorList>
            <person name="Welch R.A."/>
            <person name="Burland V."/>
            <person name="Plunkett G. III"/>
            <person name="Redford P."/>
            <person name="Roesch P."/>
            <person name="Rasko D."/>
            <person name="Buckles E.L."/>
            <person name="Liou S.-R."/>
            <person name="Boutin A."/>
            <person name="Hackett J."/>
            <person name="Stroud D."/>
            <person name="Mayhew G.F."/>
            <person name="Rose D.J."/>
            <person name="Zhou S."/>
            <person name="Schwartz D.C."/>
            <person name="Perna N.T."/>
            <person name="Mobley H.L.T."/>
            <person name="Donnenberg M.S."/>
            <person name="Blattner F.R."/>
        </authorList>
    </citation>
    <scope>NUCLEOTIDE SEQUENCE [LARGE SCALE GENOMIC DNA]</scope>
    <source>
        <strain>CFT073 / ATCC 700928 / UPEC</strain>
    </source>
</reference>
<comment type="function">
    <text evidence="1">DNA polymerase III is a complex, multichain enzyme responsible for most of the replicative synthesis in bacteria. This DNA polymerase also exhibits 3' to 5' exonuclease activity. The alpha chain is the DNA polymerase (By similarity).</text>
</comment>
<comment type="catalytic activity">
    <reaction>
        <text>DNA(n) + a 2'-deoxyribonucleoside 5'-triphosphate = DNA(n+1) + diphosphate</text>
        <dbReference type="Rhea" id="RHEA:22508"/>
        <dbReference type="Rhea" id="RHEA-COMP:17339"/>
        <dbReference type="Rhea" id="RHEA-COMP:17340"/>
        <dbReference type="ChEBI" id="CHEBI:33019"/>
        <dbReference type="ChEBI" id="CHEBI:61560"/>
        <dbReference type="ChEBI" id="CHEBI:173112"/>
        <dbReference type="EC" id="2.7.7.7"/>
    </reaction>
</comment>
<comment type="subcellular location">
    <subcellularLocation>
        <location evidence="1">Cytoplasm</location>
    </subcellularLocation>
</comment>
<proteinExistence type="inferred from homology"/>
<keyword id="KW-0963">Cytoplasm</keyword>
<keyword id="KW-0235">DNA replication</keyword>
<keyword id="KW-0239">DNA-directed DNA polymerase</keyword>
<keyword id="KW-0548">Nucleotidyltransferase</keyword>
<keyword id="KW-1185">Reference proteome</keyword>
<keyword id="KW-0808">Transferase</keyword>
<accession>Q8FL05</accession>
<organism>
    <name type="scientific">Escherichia coli O6:H1 (strain CFT073 / ATCC 700928 / UPEC)</name>
    <dbReference type="NCBI Taxonomy" id="199310"/>
    <lineage>
        <taxon>Bacteria</taxon>
        <taxon>Pseudomonadati</taxon>
        <taxon>Pseudomonadota</taxon>
        <taxon>Gammaproteobacteria</taxon>
        <taxon>Enterobacterales</taxon>
        <taxon>Enterobacteriaceae</taxon>
        <taxon>Escherichia</taxon>
    </lineage>
</organism>